<protein>
    <recommendedName>
        <fullName evidence="8">Flavonoid 8-hydroxylase 2, chloroplastic</fullName>
        <shortName evidence="8">ObF8H-2</shortName>
        <ecNumber evidence="1">1.14.15.-</ecNumber>
    </recommendedName>
</protein>
<evidence type="ECO:0000250" key="1">
    <source>
        <dbReference type="UniProtKB" id="A0A076FFM5"/>
    </source>
</evidence>
<evidence type="ECO:0000250" key="2">
    <source>
        <dbReference type="UniProtKB" id="Q5S3I3"/>
    </source>
</evidence>
<evidence type="ECO:0000250" key="3">
    <source>
        <dbReference type="UniProtKB" id="Q9SK50"/>
    </source>
</evidence>
<evidence type="ECO:0000255" key="4"/>
<evidence type="ECO:0000255" key="5">
    <source>
        <dbReference type="PROSITE-ProRule" id="PRU00628"/>
    </source>
</evidence>
<evidence type="ECO:0000269" key="6">
    <source>
    </source>
</evidence>
<evidence type="ECO:0000269" key="7">
    <source>
    </source>
</evidence>
<evidence type="ECO:0000303" key="8">
    <source>
    </source>
</evidence>
<evidence type="ECO:0000303" key="9">
    <source>
    </source>
</evidence>
<feature type="transit peptide" description="Chloroplast" evidence="4">
    <location>
        <begin position="1"/>
        <end position="46"/>
    </location>
</feature>
<feature type="chain" id="PRO_0000456924" description="Flavonoid 8-hydroxylase 2, chloroplastic">
    <location>
        <begin position="47"/>
        <end position="519"/>
    </location>
</feature>
<feature type="transmembrane region" description="Helical" evidence="4">
    <location>
        <begin position="462"/>
        <end position="478"/>
    </location>
</feature>
<feature type="transmembrane region" description="Helical" evidence="4">
    <location>
        <begin position="485"/>
        <end position="501"/>
    </location>
</feature>
<feature type="domain" description="Rieske" evidence="5">
    <location>
        <begin position="77"/>
        <end position="188"/>
    </location>
</feature>
<feature type="short sequence motif" description="Redox-active motif" evidence="3">
    <location>
        <begin position="447"/>
        <end position="450"/>
    </location>
</feature>
<feature type="binding site" evidence="5">
    <location>
        <position position="119"/>
    </location>
    <ligand>
        <name>[2Fe-2S] cluster</name>
        <dbReference type="ChEBI" id="CHEBI:190135"/>
    </ligand>
</feature>
<feature type="binding site" evidence="5">
    <location>
        <position position="121"/>
    </location>
    <ligand>
        <name>[2Fe-2S] cluster</name>
        <dbReference type="ChEBI" id="CHEBI:190135"/>
    </ligand>
</feature>
<feature type="binding site" evidence="5">
    <location>
        <position position="139"/>
    </location>
    <ligand>
        <name>[2Fe-2S] cluster</name>
        <dbReference type="ChEBI" id="CHEBI:190135"/>
    </ligand>
</feature>
<feature type="binding site" evidence="5">
    <location>
        <position position="142"/>
    </location>
    <ligand>
        <name>[2Fe-2S] cluster</name>
        <dbReference type="ChEBI" id="CHEBI:190135"/>
    </ligand>
</feature>
<feature type="binding site" evidence="2">
    <location>
        <position position="241"/>
    </location>
    <ligand>
        <name>Fe cation</name>
        <dbReference type="ChEBI" id="CHEBI:24875"/>
    </ligand>
</feature>
<feature type="binding site" evidence="2">
    <location>
        <position position="246"/>
    </location>
    <ligand>
        <name>Fe cation</name>
        <dbReference type="ChEBI" id="CHEBI:24875"/>
    </ligand>
</feature>
<feature type="site" description="Plays a role in the stabilization of the metal coordination" evidence="2">
    <location>
        <position position="235"/>
    </location>
</feature>
<gene>
    <name evidence="8" type="primary">F8H-2</name>
</gene>
<keyword id="KW-0001">2Fe-2S</keyword>
<keyword id="KW-0150">Chloroplast</keyword>
<keyword id="KW-0963">Cytoplasm</keyword>
<keyword id="KW-0408">Iron</keyword>
<keyword id="KW-0411">Iron-sulfur</keyword>
<keyword id="KW-0472">Membrane</keyword>
<keyword id="KW-0479">Metal-binding</keyword>
<keyword id="KW-0560">Oxidoreductase</keyword>
<keyword id="KW-0934">Plastid</keyword>
<keyword id="KW-0809">Transit peptide</keyword>
<keyword id="KW-0812">Transmembrane</keyword>
<keyword id="KW-1133">Transmembrane helix</keyword>
<sequence length="519" mass="59711">MEVLQASSLSFQLLRRHSRNNLINKFRNPSLPRIHMPRQNIDLKTFAAITPTVACPPSEPEIIPEKKEDKFEWYENWYPVASVCDLDKRRPHGRKVIGIDVVVWWDRKENAWKVFDDTCPHRLAPLSEGRIDQWGRLQCVYHGWCFDGAGACKFIPQAPHHGPPVETSKKACVKGVYPSCVRNGIVWFWPNSDPKYKDIFLTKKPHYIPELDDPSFTCTMTTREVPYGYEILAENLMDPSHVPYAHYGILELEKVKESAKRDREGGHELEIRVGKIDVNGFSAKQVSADYYFVPPYLYYGRITPNTATKAIDVTLPVVPEEKTAMIIFYCIPVRPGYSRLIFAGARNFAVQVDRFVPRWITHMSHNLIFDSDLFLLHVEERKLKDLDWHKSCYIPTKADGQVVAFRRWLNKYGGTQVDWRNNFTPALPPTPSREQLFDRYWSHTAECSSCSVACKRLNALEIGLQAMSLVFVAMAAAVSAPATRYSMVAMAVLSFLASKWLSRFIHKTFYNHGYDHAFI</sequence>
<organism>
    <name type="scientific">Ocimum basilicum</name>
    <name type="common">Sweet basil</name>
    <dbReference type="NCBI Taxonomy" id="39350"/>
    <lineage>
        <taxon>Eukaryota</taxon>
        <taxon>Viridiplantae</taxon>
        <taxon>Streptophyta</taxon>
        <taxon>Embryophyta</taxon>
        <taxon>Tracheophyta</taxon>
        <taxon>Spermatophyta</taxon>
        <taxon>Magnoliopsida</taxon>
        <taxon>eudicotyledons</taxon>
        <taxon>Gunneridae</taxon>
        <taxon>Pentapetalae</taxon>
        <taxon>asterids</taxon>
        <taxon>lamiids</taxon>
        <taxon>Lamiales</taxon>
        <taxon>Lamiaceae</taxon>
        <taxon>Nepetoideae</taxon>
        <taxon>Ocimeae</taxon>
        <taxon>Ociminae</taxon>
        <taxon>Ocimum</taxon>
    </lineage>
</organism>
<name>F8H2_OCIBA</name>
<reference key="1">
    <citation type="journal article" date="2014" name="Plant J.">
        <title>Unexpected roles for ancient proteins: flavone 8-hydroxylase in sweet basil trichomes is a Rieske-type, PAO-family oxygenase.</title>
        <authorList>
            <person name="Berim A."/>
            <person name="Park J.-J."/>
            <person name="Gang D.R."/>
        </authorList>
    </citation>
    <scope>NUCLEOTIDE SEQUENCE [MRNA]</scope>
    <scope>TISSUE SPECIFICITY</scope>
    <source>
        <tissue>Peltate glandular trichome</tissue>
    </source>
</reference>
<reference key="2">
    <citation type="journal article" date="2018" name="Int. J. Biol. Macromol.">
        <title>Nevadensin is a naturally occurring selective inhibitor of human carboxylesterase 1.</title>
        <authorList>
            <person name="Wang Y.-Q."/>
            <person name="Weng Z.-M."/>
            <person name="Dou T.-Y."/>
            <person name="Hou J."/>
            <person name="Wang D.-D."/>
            <person name="Ding L.-L."/>
            <person name="Zou L.-W."/>
            <person name="Yu Y."/>
            <person name="Chen J."/>
            <person name="Tang H."/>
            <person name="Ge G.-B."/>
        </authorList>
    </citation>
    <scope>BIOTECHNOLOGY</scope>
</reference>
<reference key="3">
    <citation type="journal article" date="2019" name="Nat. Prod. Rep.">
        <title>Non-volatile natural products in plant glandular trichomes: chemistry, biological activities and biosynthesis.</title>
        <authorList>
            <person name="Liu Y."/>
            <person name="Jing S.-X."/>
            <person name="Luo S.-H."/>
            <person name="Li S.-H."/>
        </authorList>
    </citation>
    <scope>PATHWAY</scope>
    <scope>REVIEW</scope>
</reference>
<comment type="function">
    <text evidence="1">Rieske-type, PAO-family oxygenase involved in the biosynthesis of polymethoxylated flavonoids natural products such as nevadensin and salvigenin, aroma compounds which contribute to the flavor of sweet basil, and exhibit pharmacological activities such as anti-allergic, anti-oxidant, antibacterial, anti-proliferative, and anti-inflammatory effects (By similarity). Catalyzes the hydroxylation of salvigenin to produce 8-hydroxysalvigenin (8-OH-SALV) (By similarity).</text>
</comment>
<comment type="catalytic activity">
    <reaction evidence="6">
        <text>salvigenin + 2 reduced [2Fe-2S]-[ferredoxin] + O2 + 2 H(+) = 8-hydroxysalvigenin + 2 oxidized [2Fe-2S]-[ferredoxin] + H2O</text>
        <dbReference type="Rhea" id="RHEA:73455"/>
        <dbReference type="Rhea" id="RHEA-COMP:10000"/>
        <dbReference type="Rhea" id="RHEA-COMP:10001"/>
        <dbReference type="ChEBI" id="CHEBI:15377"/>
        <dbReference type="ChEBI" id="CHEBI:15378"/>
        <dbReference type="ChEBI" id="CHEBI:15379"/>
        <dbReference type="ChEBI" id="CHEBI:33737"/>
        <dbReference type="ChEBI" id="CHEBI:33738"/>
        <dbReference type="ChEBI" id="CHEBI:192703"/>
        <dbReference type="ChEBI" id="CHEBI:192704"/>
    </reaction>
    <physiologicalReaction direction="left-to-right" evidence="6">
        <dbReference type="Rhea" id="RHEA:73456"/>
    </physiologicalReaction>
</comment>
<comment type="cofactor">
    <cofactor evidence="5">
        <name>[2Fe-2S] cluster</name>
        <dbReference type="ChEBI" id="CHEBI:190135"/>
    </cofactor>
    <text evidence="5">Binds 1 [2Fe-2S] cluster per subunit.</text>
</comment>
<comment type="pathway">
    <text evidence="9">Flavonoid metabolism.</text>
</comment>
<comment type="subcellular location">
    <subcellularLocation>
        <location evidence="1">Plastid</location>
        <location evidence="1">Chloroplast membrane</location>
        <topology evidence="4">Multi-pass membrane protein</topology>
    </subcellularLocation>
    <subcellularLocation>
        <location evidence="1">Cytoplasm</location>
    </subcellularLocation>
</comment>
<comment type="tissue specificity">
    <text evidence="6">Glandular trichome-specific expression in leaves.</text>
</comment>
<comment type="biotechnology">
    <text evidence="7">Nevadensin is a selective inhibitor of human carboxylesterase 1 (hCE-1), a key enzyme responsible for the hydrolysis of a wide range of endogenous and xenobiotic esters.</text>
</comment>
<accession>A0A076FF10</accession>
<dbReference type="EC" id="1.14.15.-" evidence="1"/>
<dbReference type="EMBL" id="KJ765355">
    <property type="protein sequence ID" value="AII16848.1"/>
    <property type="molecule type" value="mRNA"/>
</dbReference>
<dbReference type="SMR" id="A0A076FF10"/>
<dbReference type="GO" id="GO:0009507">
    <property type="term" value="C:chloroplast"/>
    <property type="evidence" value="ECO:0000250"/>
    <property type="project" value="UniProtKB"/>
</dbReference>
<dbReference type="GO" id="GO:0031969">
    <property type="term" value="C:chloroplast membrane"/>
    <property type="evidence" value="ECO:0007669"/>
    <property type="project" value="UniProtKB-SubCell"/>
</dbReference>
<dbReference type="GO" id="GO:0005737">
    <property type="term" value="C:cytoplasm"/>
    <property type="evidence" value="ECO:0000250"/>
    <property type="project" value="UniProtKB"/>
</dbReference>
<dbReference type="GO" id="GO:0051537">
    <property type="term" value="F:2 iron, 2 sulfur cluster binding"/>
    <property type="evidence" value="ECO:0007669"/>
    <property type="project" value="UniProtKB-KW"/>
</dbReference>
<dbReference type="GO" id="GO:0010277">
    <property type="term" value="F:chlorophyllide a oxygenase activity"/>
    <property type="evidence" value="ECO:0007669"/>
    <property type="project" value="InterPro"/>
</dbReference>
<dbReference type="GO" id="GO:0046872">
    <property type="term" value="F:metal ion binding"/>
    <property type="evidence" value="ECO:0007669"/>
    <property type="project" value="UniProtKB-KW"/>
</dbReference>
<dbReference type="GO" id="GO:0004497">
    <property type="term" value="F:monooxygenase activity"/>
    <property type="evidence" value="ECO:0000250"/>
    <property type="project" value="UniProtKB"/>
</dbReference>
<dbReference type="GO" id="GO:0009812">
    <property type="term" value="P:flavonoid metabolic process"/>
    <property type="evidence" value="ECO:0000250"/>
    <property type="project" value="UniProtKB"/>
</dbReference>
<dbReference type="CDD" id="cd03480">
    <property type="entry name" value="Rieske_RO_Alpha_PaO"/>
    <property type="match status" value="1"/>
</dbReference>
<dbReference type="Gene3D" id="3.90.380.10">
    <property type="entry name" value="Naphthalene 1,2-dioxygenase Alpha Subunit, Chain A, domain 1"/>
    <property type="match status" value="1"/>
</dbReference>
<dbReference type="Gene3D" id="2.102.10.10">
    <property type="entry name" value="Rieske [2Fe-2S] iron-sulphur domain"/>
    <property type="match status" value="1"/>
</dbReference>
<dbReference type="InterPro" id="IPR050584">
    <property type="entry name" value="Cholesterol_7-desaturase"/>
</dbReference>
<dbReference type="InterPro" id="IPR013626">
    <property type="entry name" value="PaO"/>
</dbReference>
<dbReference type="InterPro" id="IPR017941">
    <property type="entry name" value="Rieske_2Fe-2S"/>
</dbReference>
<dbReference type="InterPro" id="IPR036922">
    <property type="entry name" value="Rieske_2Fe-2S_sf"/>
</dbReference>
<dbReference type="PANTHER" id="PTHR21266:SF32">
    <property type="entry name" value="CHOLESTEROL 7-DESATURASE NVD"/>
    <property type="match status" value="1"/>
</dbReference>
<dbReference type="PANTHER" id="PTHR21266">
    <property type="entry name" value="IRON-SULFUR DOMAIN CONTAINING PROTEIN"/>
    <property type="match status" value="1"/>
</dbReference>
<dbReference type="Pfam" id="PF08417">
    <property type="entry name" value="PaO"/>
    <property type="match status" value="1"/>
</dbReference>
<dbReference type="Pfam" id="PF00355">
    <property type="entry name" value="Rieske"/>
    <property type="match status" value="1"/>
</dbReference>
<dbReference type="SUPFAM" id="SSF55961">
    <property type="entry name" value="Bet v1-like"/>
    <property type="match status" value="1"/>
</dbReference>
<dbReference type="SUPFAM" id="SSF50022">
    <property type="entry name" value="ISP domain"/>
    <property type="match status" value="1"/>
</dbReference>
<dbReference type="PROSITE" id="PS51296">
    <property type="entry name" value="RIESKE"/>
    <property type="match status" value="1"/>
</dbReference>
<proteinExistence type="evidence at protein level"/>